<keyword id="KW-0521">NADP</keyword>
<keyword id="KW-0560">Oxidoreductase</keyword>
<keyword id="KW-0627">Porphyrin biosynthesis</keyword>
<gene>
    <name evidence="1" type="primary">hemA</name>
    <name type="ordered locus">JTY_0522</name>
</gene>
<organism>
    <name type="scientific">Mycobacterium bovis (strain BCG / Tokyo 172 / ATCC 35737 / TMC 1019)</name>
    <dbReference type="NCBI Taxonomy" id="561275"/>
    <lineage>
        <taxon>Bacteria</taxon>
        <taxon>Bacillati</taxon>
        <taxon>Actinomycetota</taxon>
        <taxon>Actinomycetes</taxon>
        <taxon>Mycobacteriales</taxon>
        <taxon>Mycobacteriaceae</taxon>
        <taxon>Mycobacterium</taxon>
        <taxon>Mycobacterium tuberculosis complex</taxon>
    </lineage>
</organism>
<name>HEM1_MYCBT</name>
<comment type="function">
    <text evidence="1">Catalyzes the NADPH-dependent reduction of glutamyl-tRNA(Glu) to glutamate 1-semialdehyde (GSA).</text>
</comment>
<comment type="catalytic activity">
    <reaction evidence="1">
        <text>(S)-4-amino-5-oxopentanoate + tRNA(Glu) + NADP(+) = L-glutamyl-tRNA(Glu) + NADPH + H(+)</text>
        <dbReference type="Rhea" id="RHEA:12344"/>
        <dbReference type="Rhea" id="RHEA-COMP:9663"/>
        <dbReference type="Rhea" id="RHEA-COMP:9680"/>
        <dbReference type="ChEBI" id="CHEBI:15378"/>
        <dbReference type="ChEBI" id="CHEBI:57501"/>
        <dbReference type="ChEBI" id="CHEBI:57783"/>
        <dbReference type="ChEBI" id="CHEBI:58349"/>
        <dbReference type="ChEBI" id="CHEBI:78442"/>
        <dbReference type="ChEBI" id="CHEBI:78520"/>
        <dbReference type="EC" id="1.2.1.70"/>
    </reaction>
</comment>
<comment type="pathway">
    <text evidence="1">Porphyrin-containing compound metabolism; protoporphyrin-IX biosynthesis; 5-aminolevulinate from L-glutamyl-tRNA(Glu): step 1/2.</text>
</comment>
<comment type="subunit">
    <text evidence="1">Homodimer.</text>
</comment>
<comment type="domain">
    <text evidence="1">Possesses an unusual extended V-shaped dimeric structure with each monomer consisting of three distinct domains arranged along a curved 'spinal' alpha-helix. The N-terminal catalytic domain specifically recognizes the glutamate moiety of the substrate. The second domain is the NADPH-binding domain, and the third C-terminal domain is responsible for dimerization.</text>
</comment>
<comment type="miscellaneous">
    <text evidence="1">During catalysis, the active site Cys acts as a nucleophile attacking the alpha-carbonyl group of tRNA-bound glutamate with the formation of a thioester intermediate between enzyme and glutamate, and the concomitant release of tRNA(Glu). The thioester intermediate is finally reduced by direct hydride transfer from NADPH, to form the product GSA.</text>
</comment>
<comment type="similarity">
    <text evidence="1">Belongs to the glutamyl-tRNA reductase family.</text>
</comment>
<proteinExistence type="inferred from homology"/>
<protein>
    <recommendedName>
        <fullName evidence="1">Glutamyl-tRNA reductase</fullName>
        <shortName evidence="1">GluTR</shortName>
        <ecNumber evidence="1">1.2.1.70</ecNumber>
    </recommendedName>
</protein>
<feature type="chain" id="PRO_1000190535" description="Glutamyl-tRNA reductase">
    <location>
        <begin position="1"/>
        <end position="468"/>
    </location>
</feature>
<feature type="region of interest" description="Disordered" evidence="2">
    <location>
        <begin position="443"/>
        <end position="468"/>
    </location>
</feature>
<feature type="compositionally biased region" description="Polar residues" evidence="2">
    <location>
        <begin position="458"/>
        <end position="468"/>
    </location>
</feature>
<feature type="active site" description="Nucleophile" evidence="1">
    <location>
        <position position="50"/>
    </location>
</feature>
<feature type="binding site" evidence="1">
    <location>
        <begin position="49"/>
        <end position="52"/>
    </location>
    <ligand>
        <name>substrate</name>
    </ligand>
</feature>
<feature type="binding site" evidence="1">
    <location>
        <position position="109"/>
    </location>
    <ligand>
        <name>substrate</name>
    </ligand>
</feature>
<feature type="binding site" evidence="1">
    <location>
        <begin position="114"/>
        <end position="116"/>
    </location>
    <ligand>
        <name>substrate</name>
    </ligand>
</feature>
<feature type="binding site" evidence="1">
    <location>
        <position position="120"/>
    </location>
    <ligand>
        <name>substrate</name>
    </ligand>
</feature>
<feature type="binding site" evidence="1">
    <location>
        <begin position="189"/>
        <end position="194"/>
    </location>
    <ligand>
        <name>NADP(+)</name>
        <dbReference type="ChEBI" id="CHEBI:58349"/>
    </ligand>
</feature>
<feature type="site" description="Important for activity" evidence="1">
    <location>
        <position position="99"/>
    </location>
</feature>
<sequence>MSVLLFGVSHRSAPVVVLEQLSIDESDQVKIIDRVLASPLVTEAMVLSTCNRVEVYAVVDAFHGGLSVIGQVLAEHSGMSMGELTKYAYVRYSEAAVEHLFAVASGLDSAVIGEQQVLGQVRRAYAVAESNRTVGRVLHELAQRALSVGKRVHSETAIDAAGASVVSVALGMAERKLGSLAGTTAVVIGAGAMGALSAVHLTRAGVGHIQVLNRSLSRAQRLARRIRESGVPAEALALDRLANVLADADVVVSCTGAVRPVVSLADVHHALAAARRDEATRPLVICDLGMPRDVDPAVARLPCVWVVDVDSVQHEPSAHAAAADVEAARHIVAAEVASYLVGQRMAEVTPTVTALRQRAAEVVEAELLRLDNRLPGLQSVQREEVARTVRRVVDKLLHAPTVRIKQLASAPGGDSYAEALRELFELDQTAVDAVATAGELPVVPSGFDAESRRGGGDMQSSPKRSPSN</sequence>
<reference key="1">
    <citation type="journal article" date="2009" name="Vaccine">
        <title>Whole genome sequence analysis of Mycobacterium bovis bacillus Calmette-Guerin (BCG) Tokyo 172: a comparative study of BCG vaccine substrains.</title>
        <authorList>
            <person name="Seki M."/>
            <person name="Honda I."/>
            <person name="Fujita I."/>
            <person name="Yano I."/>
            <person name="Yamamoto S."/>
            <person name="Koyama A."/>
        </authorList>
    </citation>
    <scope>NUCLEOTIDE SEQUENCE [LARGE SCALE GENOMIC DNA]</scope>
    <source>
        <strain>BCG / Tokyo 172 / ATCC 35737 / TMC 1019</strain>
    </source>
</reference>
<evidence type="ECO:0000255" key="1">
    <source>
        <dbReference type="HAMAP-Rule" id="MF_00087"/>
    </source>
</evidence>
<evidence type="ECO:0000256" key="2">
    <source>
        <dbReference type="SAM" id="MobiDB-lite"/>
    </source>
</evidence>
<accession>C1AKI9</accession>
<dbReference type="EC" id="1.2.1.70" evidence="1"/>
<dbReference type="EMBL" id="AP010918">
    <property type="protein sequence ID" value="BAH24818.1"/>
    <property type="molecule type" value="Genomic_DNA"/>
</dbReference>
<dbReference type="RefSeq" id="WP_003402699.1">
    <property type="nucleotide sequence ID" value="NZ_CP014566.1"/>
</dbReference>
<dbReference type="SMR" id="C1AKI9"/>
<dbReference type="KEGG" id="mbt:JTY_0522"/>
<dbReference type="HOGENOM" id="CLU_035113_4_0_11"/>
<dbReference type="UniPathway" id="UPA00251">
    <property type="reaction ID" value="UER00316"/>
</dbReference>
<dbReference type="GO" id="GO:0008883">
    <property type="term" value="F:glutamyl-tRNA reductase activity"/>
    <property type="evidence" value="ECO:0007669"/>
    <property type="project" value="UniProtKB-UniRule"/>
</dbReference>
<dbReference type="GO" id="GO:0050661">
    <property type="term" value="F:NADP binding"/>
    <property type="evidence" value="ECO:0007669"/>
    <property type="project" value="InterPro"/>
</dbReference>
<dbReference type="GO" id="GO:0019353">
    <property type="term" value="P:protoporphyrinogen IX biosynthetic process from glutamate"/>
    <property type="evidence" value="ECO:0007669"/>
    <property type="project" value="TreeGrafter"/>
</dbReference>
<dbReference type="CDD" id="cd05213">
    <property type="entry name" value="NAD_bind_Glutamyl_tRNA_reduct"/>
    <property type="match status" value="1"/>
</dbReference>
<dbReference type="FunFam" id="3.30.460.30:FF:000001">
    <property type="entry name" value="Glutamyl-tRNA reductase"/>
    <property type="match status" value="1"/>
</dbReference>
<dbReference type="Gene3D" id="3.30.460.30">
    <property type="entry name" value="Glutamyl-tRNA reductase, N-terminal domain"/>
    <property type="match status" value="1"/>
</dbReference>
<dbReference type="Gene3D" id="3.40.50.720">
    <property type="entry name" value="NAD(P)-binding Rossmann-like Domain"/>
    <property type="match status" value="1"/>
</dbReference>
<dbReference type="HAMAP" id="MF_00087">
    <property type="entry name" value="Glu_tRNA_reductase"/>
    <property type="match status" value="1"/>
</dbReference>
<dbReference type="InterPro" id="IPR000343">
    <property type="entry name" value="4pyrrol_synth_GluRdtase"/>
</dbReference>
<dbReference type="InterPro" id="IPR015896">
    <property type="entry name" value="4pyrrol_synth_GluRdtase_dimer"/>
</dbReference>
<dbReference type="InterPro" id="IPR015895">
    <property type="entry name" value="4pyrrol_synth_GluRdtase_N"/>
</dbReference>
<dbReference type="InterPro" id="IPR018214">
    <property type="entry name" value="GluRdtase_CS"/>
</dbReference>
<dbReference type="InterPro" id="IPR036453">
    <property type="entry name" value="GluRdtase_dimer_dom_sf"/>
</dbReference>
<dbReference type="InterPro" id="IPR036343">
    <property type="entry name" value="GluRdtase_N_sf"/>
</dbReference>
<dbReference type="InterPro" id="IPR036291">
    <property type="entry name" value="NAD(P)-bd_dom_sf"/>
</dbReference>
<dbReference type="InterPro" id="IPR006151">
    <property type="entry name" value="Shikm_DH/Glu-tRNA_Rdtase"/>
</dbReference>
<dbReference type="NCBIfam" id="TIGR01035">
    <property type="entry name" value="hemA"/>
    <property type="match status" value="1"/>
</dbReference>
<dbReference type="NCBIfam" id="NF000744">
    <property type="entry name" value="PRK00045.1-3"/>
    <property type="match status" value="1"/>
</dbReference>
<dbReference type="PANTHER" id="PTHR43013">
    <property type="entry name" value="GLUTAMYL-TRNA REDUCTASE"/>
    <property type="match status" value="1"/>
</dbReference>
<dbReference type="PANTHER" id="PTHR43013:SF1">
    <property type="entry name" value="GLUTAMYL-TRNA REDUCTASE"/>
    <property type="match status" value="1"/>
</dbReference>
<dbReference type="Pfam" id="PF00745">
    <property type="entry name" value="GlutR_dimer"/>
    <property type="match status" value="1"/>
</dbReference>
<dbReference type="Pfam" id="PF05201">
    <property type="entry name" value="GlutR_N"/>
    <property type="match status" value="1"/>
</dbReference>
<dbReference type="Pfam" id="PF01488">
    <property type="entry name" value="Shikimate_DH"/>
    <property type="match status" value="1"/>
</dbReference>
<dbReference type="PIRSF" id="PIRSF000445">
    <property type="entry name" value="4pyrrol_synth_GluRdtase"/>
    <property type="match status" value="1"/>
</dbReference>
<dbReference type="SUPFAM" id="SSF69742">
    <property type="entry name" value="Glutamyl tRNA-reductase catalytic, N-terminal domain"/>
    <property type="match status" value="1"/>
</dbReference>
<dbReference type="SUPFAM" id="SSF69075">
    <property type="entry name" value="Glutamyl tRNA-reductase dimerization domain"/>
    <property type="match status" value="1"/>
</dbReference>
<dbReference type="SUPFAM" id="SSF51735">
    <property type="entry name" value="NAD(P)-binding Rossmann-fold domains"/>
    <property type="match status" value="1"/>
</dbReference>
<dbReference type="PROSITE" id="PS00747">
    <property type="entry name" value="GLUTR"/>
    <property type="match status" value="1"/>
</dbReference>